<keyword id="KW-0010">Activator</keyword>
<keyword id="KW-0046">Antibiotic resistance</keyword>
<keyword id="KW-0238">DNA-binding</keyword>
<keyword id="KW-1185">Reference proteome</keyword>
<keyword id="KW-0677">Repeat</keyword>
<keyword id="KW-0804">Transcription</keyword>
<keyword id="KW-0805">Transcription regulation</keyword>
<organism>
    <name type="scientific">Shigella flexneri</name>
    <dbReference type="NCBI Taxonomy" id="623"/>
    <lineage>
        <taxon>Bacteria</taxon>
        <taxon>Pseudomonadati</taxon>
        <taxon>Pseudomonadota</taxon>
        <taxon>Gammaproteobacteria</taxon>
        <taxon>Enterobacterales</taxon>
        <taxon>Enterobacteriaceae</taxon>
        <taxon>Shigella</taxon>
    </lineage>
</organism>
<protein>
    <recommendedName>
        <fullName>Multiple antibiotic resistance protein MarA</fullName>
    </recommendedName>
</protein>
<reference key="1">
    <citation type="journal article" date="2002" name="Nucleic Acids Res.">
        <title>Genome sequence of Shigella flexneri 2a: insights into pathogenicity through comparison with genomes of Escherichia coli K12 and O157.</title>
        <authorList>
            <person name="Jin Q."/>
            <person name="Yuan Z."/>
            <person name="Xu J."/>
            <person name="Wang Y."/>
            <person name="Shen Y."/>
            <person name="Lu W."/>
            <person name="Wang J."/>
            <person name="Liu H."/>
            <person name="Yang J."/>
            <person name="Yang F."/>
            <person name="Zhang X."/>
            <person name="Zhang J."/>
            <person name="Yang G."/>
            <person name="Wu H."/>
            <person name="Qu D."/>
            <person name="Dong J."/>
            <person name="Sun L."/>
            <person name="Xue Y."/>
            <person name="Zhao A."/>
            <person name="Gao Y."/>
            <person name="Zhu J."/>
            <person name="Kan B."/>
            <person name="Ding K."/>
            <person name="Chen S."/>
            <person name="Cheng H."/>
            <person name="Yao Z."/>
            <person name="He B."/>
            <person name="Chen R."/>
            <person name="Ma D."/>
            <person name="Qiang B."/>
            <person name="Wen Y."/>
            <person name="Hou Y."/>
            <person name="Yu J."/>
        </authorList>
    </citation>
    <scope>NUCLEOTIDE SEQUENCE [LARGE SCALE GENOMIC DNA]</scope>
    <source>
        <strain>301 / Serotype 2a</strain>
    </source>
</reference>
<reference key="2">
    <citation type="journal article" date="2003" name="Infect. Immun.">
        <title>Complete genome sequence and comparative genomics of Shigella flexneri serotype 2a strain 2457T.</title>
        <authorList>
            <person name="Wei J."/>
            <person name="Goldberg M.B."/>
            <person name="Burland V."/>
            <person name="Venkatesan M.M."/>
            <person name="Deng W."/>
            <person name="Fournier G."/>
            <person name="Mayhew G.F."/>
            <person name="Plunkett G. III"/>
            <person name="Rose D.J."/>
            <person name="Darling A."/>
            <person name="Mau B."/>
            <person name="Perna N.T."/>
            <person name="Payne S.M."/>
            <person name="Runyen-Janecky L.J."/>
            <person name="Zhou S."/>
            <person name="Schwartz D.C."/>
            <person name="Blattner F.R."/>
        </authorList>
    </citation>
    <scope>NUCLEOTIDE SEQUENCE [LARGE SCALE GENOMIC DNA]</scope>
    <source>
        <strain>ATCC 700930 / 2457T / Serotype 2a</strain>
    </source>
</reference>
<comment type="function">
    <text evidence="1">May be a transcriptional activator of genes involved in the multiple antibiotic resistance (Mar) phenotype. It can also activate genes such as sodA, zwf and micF (By similarity).</text>
</comment>
<comment type="subunit">
    <text evidence="1">Monomer.</text>
</comment>
<dbReference type="EMBL" id="AE005674">
    <property type="protein sequence ID" value="AAN43152.2"/>
    <property type="molecule type" value="Genomic_DNA"/>
</dbReference>
<dbReference type="EMBL" id="AE014073">
    <property type="protein sequence ID" value="AAP17046.1"/>
    <property type="molecule type" value="Genomic_DNA"/>
</dbReference>
<dbReference type="RefSeq" id="NP_707445.2">
    <property type="nucleotide sequence ID" value="NC_004337.2"/>
</dbReference>
<dbReference type="RefSeq" id="WP_000091199.1">
    <property type="nucleotide sequence ID" value="NZ_WPGW01000096.1"/>
</dbReference>
<dbReference type="SMR" id="P0ACH7"/>
<dbReference type="STRING" id="198214.SF1563"/>
<dbReference type="PaxDb" id="198214-SF1563"/>
<dbReference type="GeneID" id="1026416"/>
<dbReference type="GeneID" id="93775695"/>
<dbReference type="KEGG" id="sfl:SF1563"/>
<dbReference type="KEGG" id="sfx:S1690"/>
<dbReference type="PATRIC" id="fig|198214.7.peg.1848"/>
<dbReference type="HOGENOM" id="CLU_000445_81_14_6"/>
<dbReference type="Proteomes" id="UP000001006">
    <property type="component" value="Chromosome"/>
</dbReference>
<dbReference type="Proteomes" id="UP000002673">
    <property type="component" value="Chromosome"/>
</dbReference>
<dbReference type="GO" id="GO:0003700">
    <property type="term" value="F:DNA-binding transcription factor activity"/>
    <property type="evidence" value="ECO:0007669"/>
    <property type="project" value="InterPro"/>
</dbReference>
<dbReference type="GO" id="GO:0043565">
    <property type="term" value="F:sequence-specific DNA binding"/>
    <property type="evidence" value="ECO:0007669"/>
    <property type="project" value="InterPro"/>
</dbReference>
<dbReference type="GO" id="GO:0046677">
    <property type="term" value="P:response to antibiotic"/>
    <property type="evidence" value="ECO:0007669"/>
    <property type="project" value="UniProtKB-KW"/>
</dbReference>
<dbReference type="FunFam" id="1.10.10.60:FF:000013">
    <property type="entry name" value="DNA-binding transcriptional activator MarA"/>
    <property type="match status" value="1"/>
</dbReference>
<dbReference type="FunFam" id="1.10.10.60:FF:000196">
    <property type="entry name" value="Multiple antibiotic resistance protein MarA"/>
    <property type="match status" value="1"/>
</dbReference>
<dbReference type="Gene3D" id="1.10.10.60">
    <property type="entry name" value="Homeodomain-like"/>
    <property type="match status" value="2"/>
</dbReference>
<dbReference type="InterPro" id="IPR009057">
    <property type="entry name" value="Homeodomain-like_sf"/>
</dbReference>
<dbReference type="InterPro" id="IPR018060">
    <property type="entry name" value="HTH_AraC"/>
</dbReference>
<dbReference type="InterPro" id="IPR018062">
    <property type="entry name" value="HTH_AraC-typ_CS"/>
</dbReference>
<dbReference type="InterPro" id="IPR050959">
    <property type="entry name" value="MarA-like"/>
</dbReference>
<dbReference type="NCBIfam" id="NF012198">
    <property type="entry name" value="MarA_TF"/>
    <property type="match status" value="1"/>
</dbReference>
<dbReference type="NCBIfam" id="NF008564">
    <property type="entry name" value="PRK11511.1"/>
    <property type="match status" value="1"/>
</dbReference>
<dbReference type="PANTHER" id="PTHR47504:SF4">
    <property type="entry name" value="MULTIPLE ANTIBIOTIC RESISTANCE PROTEIN MARA"/>
    <property type="match status" value="1"/>
</dbReference>
<dbReference type="PANTHER" id="PTHR47504">
    <property type="entry name" value="RIGHT ORIGIN-BINDING PROTEIN"/>
    <property type="match status" value="1"/>
</dbReference>
<dbReference type="Pfam" id="PF12833">
    <property type="entry name" value="HTH_18"/>
    <property type="match status" value="1"/>
</dbReference>
<dbReference type="SMART" id="SM00342">
    <property type="entry name" value="HTH_ARAC"/>
    <property type="match status" value="1"/>
</dbReference>
<dbReference type="SUPFAM" id="SSF46689">
    <property type="entry name" value="Homeodomain-like"/>
    <property type="match status" value="2"/>
</dbReference>
<dbReference type="PROSITE" id="PS00041">
    <property type="entry name" value="HTH_ARAC_FAMILY_1"/>
    <property type="match status" value="1"/>
</dbReference>
<dbReference type="PROSITE" id="PS01124">
    <property type="entry name" value="HTH_ARAC_FAMILY_2"/>
    <property type="match status" value="1"/>
</dbReference>
<sequence length="127" mass="15184">MSRRNTDAITIHSILDWIEDNLESPLSLEKVSERSGYSKWHLQRMFKKETGHSLGQYIRSRKMTEIAQKLKESNEPILYLAERYGFESQQTLTRTFKNYFDVPPHKYRMTNMQGESRFLHPLNHYNS</sequence>
<name>MARA_SHIFL</name>
<accession>P0ACH7</accession>
<accession>P27246</accession>
<proteinExistence type="inferred from homology"/>
<evidence type="ECO:0000250" key="1"/>
<evidence type="ECO:0000255" key="2">
    <source>
        <dbReference type="PROSITE-ProRule" id="PRU00593"/>
    </source>
</evidence>
<feature type="chain" id="PRO_0000194536" description="Multiple antibiotic resistance protein MarA">
    <location>
        <begin position="1"/>
        <end position="127"/>
    </location>
</feature>
<feature type="domain" description="HTH araC/xylS-type" evidence="2">
    <location>
        <begin position="12"/>
        <end position="110"/>
    </location>
</feature>
<feature type="DNA-binding region" description="H-T-H motif" evidence="2">
    <location>
        <begin position="29"/>
        <end position="50"/>
    </location>
</feature>
<feature type="DNA-binding region" description="H-T-H motif" evidence="2">
    <location>
        <begin position="77"/>
        <end position="100"/>
    </location>
</feature>
<gene>
    <name type="primary">marA</name>
    <name type="ordered locus">SF1563</name>
    <name type="ordered locus">S1690</name>
</gene>